<name>RBP1A_XENLA</name>
<accession>Q9PT60</accession>
<accession>Q6NRU6</accession>
<dbReference type="EC" id="7.6.2.2" evidence="2"/>
<dbReference type="EC" id="7.6.2.3" evidence="2"/>
<dbReference type="EMBL" id="AJ252165">
    <property type="protein sequence ID" value="CAB65771.1"/>
    <property type="molecule type" value="mRNA"/>
</dbReference>
<dbReference type="EMBL" id="BC070617">
    <property type="protein sequence ID" value="AAH70617.1"/>
    <property type="molecule type" value="mRNA"/>
</dbReference>
<dbReference type="RefSeq" id="NP_001090213.1">
    <molecule id="Q9PT60-2"/>
    <property type="nucleotide sequence ID" value="NM_001096744.1"/>
</dbReference>
<dbReference type="SMR" id="Q9PT60"/>
<dbReference type="GeneID" id="779115"/>
<dbReference type="KEGG" id="xla:779115"/>
<dbReference type="AGR" id="Xenbase:XB-GENE-1016078"/>
<dbReference type="CTD" id="779115"/>
<dbReference type="Xenbase" id="XB-GENE-1016078">
    <property type="gene designation" value="ralbp1.S"/>
</dbReference>
<dbReference type="OMA" id="AMERTMM"/>
<dbReference type="OrthoDB" id="10033734at2759"/>
<dbReference type="Proteomes" id="UP000186698">
    <property type="component" value="Chromosome 6S"/>
</dbReference>
<dbReference type="Bgee" id="779115">
    <property type="expression patterns" value="Expressed in egg cell and 19 other cell types or tissues"/>
</dbReference>
<dbReference type="GO" id="GO:0005829">
    <property type="term" value="C:cytosol"/>
    <property type="evidence" value="ECO:0007669"/>
    <property type="project" value="UniProtKB-SubCell"/>
</dbReference>
<dbReference type="GO" id="GO:0030027">
    <property type="term" value="C:lamellipodium"/>
    <property type="evidence" value="ECO:0007669"/>
    <property type="project" value="UniProtKB-SubCell"/>
</dbReference>
<dbReference type="GO" id="GO:0016020">
    <property type="term" value="C:membrane"/>
    <property type="evidence" value="ECO:0000250"/>
    <property type="project" value="UniProtKB"/>
</dbReference>
<dbReference type="GO" id="GO:0005739">
    <property type="term" value="C:mitochondrion"/>
    <property type="evidence" value="ECO:0000250"/>
    <property type="project" value="UniProtKB"/>
</dbReference>
<dbReference type="GO" id="GO:0005634">
    <property type="term" value="C:nucleus"/>
    <property type="evidence" value="ECO:0007669"/>
    <property type="project" value="UniProtKB-SubCell"/>
</dbReference>
<dbReference type="GO" id="GO:0005886">
    <property type="term" value="C:plasma membrane"/>
    <property type="evidence" value="ECO:0007669"/>
    <property type="project" value="UniProtKB-SubCell"/>
</dbReference>
<dbReference type="GO" id="GO:0000922">
    <property type="term" value="C:spindle pole"/>
    <property type="evidence" value="ECO:0007669"/>
    <property type="project" value="UniProtKB-SubCell"/>
</dbReference>
<dbReference type="GO" id="GO:0015431">
    <property type="term" value="F:ABC-type glutathione S-conjugate transporter activity"/>
    <property type="evidence" value="ECO:0007669"/>
    <property type="project" value="UniProtKB-EC"/>
</dbReference>
<dbReference type="GO" id="GO:0008559">
    <property type="term" value="F:ABC-type xenobiotic transporter activity"/>
    <property type="evidence" value="ECO:0007669"/>
    <property type="project" value="UniProtKB-EC"/>
</dbReference>
<dbReference type="GO" id="GO:0005524">
    <property type="term" value="F:ATP binding"/>
    <property type="evidence" value="ECO:0007669"/>
    <property type="project" value="UniProtKB-KW"/>
</dbReference>
<dbReference type="GO" id="GO:0005096">
    <property type="term" value="F:GTPase activator activity"/>
    <property type="evidence" value="ECO:0000250"/>
    <property type="project" value="UniProtKB"/>
</dbReference>
<dbReference type="GO" id="GO:0031267">
    <property type="term" value="F:small GTPase binding"/>
    <property type="evidence" value="ECO:0000353"/>
    <property type="project" value="UniProtKB"/>
</dbReference>
<dbReference type="GO" id="GO:0030036">
    <property type="term" value="P:actin cytoskeleton organization"/>
    <property type="evidence" value="ECO:0000315"/>
    <property type="project" value="UniProtKB"/>
</dbReference>
<dbReference type="GO" id="GO:0001702">
    <property type="term" value="P:gastrulation with mouth forming second"/>
    <property type="evidence" value="ECO:0000315"/>
    <property type="project" value="UniProtKB"/>
</dbReference>
<dbReference type="GO" id="GO:0090141">
    <property type="term" value="P:positive regulation of mitochondrial fission"/>
    <property type="evidence" value="ECO:0000250"/>
    <property type="project" value="UniProtKB"/>
</dbReference>
<dbReference type="GO" id="GO:0001934">
    <property type="term" value="P:positive regulation of protein phosphorylation"/>
    <property type="evidence" value="ECO:0000250"/>
    <property type="project" value="UniProtKB"/>
</dbReference>
<dbReference type="GO" id="GO:0006898">
    <property type="term" value="P:receptor-mediated endocytosis"/>
    <property type="evidence" value="ECO:0000318"/>
    <property type="project" value="GO_Central"/>
</dbReference>
<dbReference type="GO" id="GO:0032489">
    <property type="term" value="P:regulation of Cdc42 protein signal transduction"/>
    <property type="evidence" value="ECO:0000250"/>
    <property type="project" value="UniProtKB"/>
</dbReference>
<dbReference type="GO" id="GO:0007264">
    <property type="term" value="P:small GTPase-mediated signal transduction"/>
    <property type="evidence" value="ECO:0000353"/>
    <property type="project" value="UniProtKB"/>
</dbReference>
<dbReference type="CDD" id="cd04381">
    <property type="entry name" value="RhoGap_RalBP1"/>
    <property type="match status" value="1"/>
</dbReference>
<dbReference type="FunFam" id="1.10.555.10:FF:000027">
    <property type="entry name" value="RalA-binding protein 1"/>
    <property type="match status" value="1"/>
</dbReference>
<dbReference type="FunFam" id="1.20.58.90:FF:000001">
    <property type="entry name" value="ralA-binding protein 1"/>
    <property type="match status" value="1"/>
</dbReference>
<dbReference type="Gene3D" id="1.20.58.90">
    <property type="match status" value="1"/>
</dbReference>
<dbReference type="Gene3D" id="1.10.555.10">
    <property type="entry name" value="Rho GTPase activation protein"/>
    <property type="match status" value="1"/>
</dbReference>
<dbReference type="InterPro" id="IPR039767">
    <property type="entry name" value="RALBP1"/>
</dbReference>
<dbReference type="InterPro" id="IPR049041">
    <property type="entry name" value="RalBP1-like_Ral-bd"/>
</dbReference>
<dbReference type="InterPro" id="IPR008936">
    <property type="entry name" value="Rho_GTPase_activation_prot"/>
</dbReference>
<dbReference type="InterPro" id="IPR000198">
    <property type="entry name" value="RhoGAP_dom"/>
</dbReference>
<dbReference type="PANTHER" id="PTHR12783">
    <property type="entry name" value="RALA BINDING PROTEIN 1 RALBP1"/>
    <property type="match status" value="1"/>
</dbReference>
<dbReference type="PANTHER" id="PTHR12783:SF5">
    <property type="entry name" value="RALA-BINDING PROTEIN 1"/>
    <property type="match status" value="1"/>
</dbReference>
<dbReference type="Pfam" id="PF00620">
    <property type="entry name" value="RhoGAP"/>
    <property type="match status" value="1"/>
</dbReference>
<dbReference type="Pfam" id="PF20924">
    <property type="entry name" value="RLIP76_Ral-bd"/>
    <property type="match status" value="1"/>
</dbReference>
<dbReference type="SMART" id="SM00324">
    <property type="entry name" value="RhoGAP"/>
    <property type="match status" value="1"/>
</dbReference>
<dbReference type="SUPFAM" id="SSF48350">
    <property type="entry name" value="GTPase activation domain, GAP"/>
    <property type="match status" value="1"/>
</dbReference>
<dbReference type="PROSITE" id="PS50238">
    <property type="entry name" value="RHOGAP"/>
    <property type="match status" value="1"/>
</dbReference>
<keyword id="KW-0025">Alternative splicing</keyword>
<keyword id="KW-0067">ATP-binding</keyword>
<keyword id="KW-1003">Cell membrane</keyword>
<keyword id="KW-0966">Cell projection</keyword>
<keyword id="KW-0963">Cytoplasm</keyword>
<keyword id="KW-0206">Cytoskeleton</keyword>
<keyword id="KW-0217">Developmental protein</keyword>
<keyword id="KW-0343">GTPase activation</keyword>
<keyword id="KW-0472">Membrane</keyword>
<keyword id="KW-0496">Mitochondrion</keyword>
<keyword id="KW-0547">Nucleotide-binding</keyword>
<keyword id="KW-0539">Nucleus</keyword>
<keyword id="KW-1185">Reference proteome</keyword>
<keyword id="KW-0677">Repeat</keyword>
<keyword id="KW-1278">Translocase</keyword>
<gene>
    <name type="primary">ralbp1-a</name>
    <name evidence="14" type="synonym">rlip</name>
</gene>
<comment type="function">
    <text evidence="2 6">Multifunctional protein that functions as a downstream effector of ralA and ralB (PubMed:15511640). As a GTPase-activating protein/GAP can inactivate CDC42 and RAC1 by stimulating their GTPase activity. As part of the Ral signaling pathway, may also regulate ligand-dependent EGF and insulin receptors-mediated endocytosis. During mitosis, may act as a scaffold protein in the phosphorylation of EPSIN/EPN1 by the mitotic kinase cyclin B-CDK1, preventing endocytosis during that phase of the cell cycle. During mitosis, also controls mitochondrial fission as an effector of ralA. Recruited to mitochondrion by ralA, acts as a scaffold to foster the mitotic kinase cyclin B-CDK1-mediated phosphorylation and activation of DNM1L (By similarity). Acts on the cytoskeleton, to regulate pigment distribution and to regulate gastrulation (PubMed:15511640).</text>
</comment>
<comment type="function">
    <text evidence="2">Could also function as a primary ATP-dependent active transporter for glutathione conjugates of electrophiles. May also actively catalyze the efflux of a wide range of substrates including xenobiotics like doxorubicin (DOX) contributing to cell multidrug resistance.</text>
</comment>
<comment type="catalytic activity">
    <reaction evidence="2">
        <text>an S-substituted glutathione(in) + ATP + H2O = an S-substituted glutathione(out) + ADP + phosphate + H(+)</text>
        <dbReference type="Rhea" id="RHEA:19121"/>
        <dbReference type="ChEBI" id="CHEBI:15377"/>
        <dbReference type="ChEBI" id="CHEBI:15378"/>
        <dbReference type="ChEBI" id="CHEBI:30616"/>
        <dbReference type="ChEBI" id="CHEBI:43474"/>
        <dbReference type="ChEBI" id="CHEBI:90779"/>
        <dbReference type="ChEBI" id="CHEBI:456216"/>
        <dbReference type="EC" id="7.6.2.3"/>
    </reaction>
    <physiologicalReaction direction="left-to-right" evidence="2">
        <dbReference type="Rhea" id="RHEA:19122"/>
    </physiologicalReaction>
</comment>
<comment type="catalytic activity">
    <reaction evidence="2">
        <text>ATP + H2O + xenobioticSide 1 = ADP + phosphate + xenobioticSide 2.</text>
        <dbReference type="EC" id="7.6.2.2"/>
    </reaction>
</comment>
<comment type="catalytic activity">
    <reaction evidence="2">
        <text>leukotriene C4(in) + ATP + H2O = leukotriene C4(out) + ADP + phosphate + H(+)</text>
        <dbReference type="Rhea" id="RHEA:38963"/>
        <dbReference type="ChEBI" id="CHEBI:15377"/>
        <dbReference type="ChEBI" id="CHEBI:15378"/>
        <dbReference type="ChEBI" id="CHEBI:30616"/>
        <dbReference type="ChEBI" id="CHEBI:43474"/>
        <dbReference type="ChEBI" id="CHEBI:57973"/>
        <dbReference type="ChEBI" id="CHEBI:456216"/>
    </reaction>
    <physiologicalReaction direction="left-to-right" evidence="2">
        <dbReference type="Rhea" id="RHEA:38964"/>
    </physiologicalReaction>
</comment>
<comment type="subunit">
    <text evidence="6 8">Interacts with the active, GTP-bound form of ralB and ralA.</text>
</comment>
<comment type="subcellular location">
    <subcellularLocation>
        <location evidence="6">Cell membrane</location>
        <topology evidence="6">Peripheral membrane protein</topology>
    </subcellularLocation>
    <subcellularLocation>
        <location evidence="6 7">Cytoplasm</location>
        <location evidence="6 7">Cytosol</location>
    </subcellularLocation>
    <subcellularLocation>
        <location evidence="3">Cytoplasm</location>
        <location evidence="3">Cytoskeleton</location>
        <location evidence="3">Spindle pole</location>
    </subcellularLocation>
    <subcellularLocation>
        <location evidence="7">Nucleus</location>
    </subcellularLocation>
    <subcellularLocation>
        <location evidence="2">Mitochondrion</location>
    </subcellularLocation>
    <text evidence="6 7">Targeted to the plasma membrane through its interaction with ralB, directed by FGF signaling. Docking on the membrane is required to transduce the Ral signal (PubMed:15511640). Nuclear localization is cell cycle dependent while membrane localization is seen in adherent cells (PubMed:22319010).</text>
</comment>
<comment type="subcellular location">
    <molecule>Isoform 2</molecule>
    <subcellularLocation>
        <location evidence="7">Nucleus</location>
    </subcellularLocation>
    <subcellularLocation>
        <location evidence="7">Cell projection</location>
        <location evidence="7">Lamellipodium</location>
    </subcellularLocation>
</comment>
<comment type="alternative products">
    <event type="alternative splicing"/>
    <isoform>
        <id>Q9PT60-1</id>
        <name evidence="6">1</name>
        <sequence type="displayed"/>
    </isoform>
    <isoform>
        <id>Q9PT60-2</id>
        <name>2</name>
        <name evidence="10">miniRalBP1</name>
        <sequence type="described" ref="VSP_051990 VSP_051991"/>
    </isoform>
</comment>
<comment type="developmental stage">
    <text evidence="6">Expressed both maternally and zygotically during oogenesis and early development.</text>
</comment>
<comment type="domain">
    <text evidence="3">The Rho-GAP domain mediates the GTPase activator activity toward CDC42.</text>
</comment>
<organism>
    <name type="scientific">Xenopus laevis</name>
    <name type="common">African clawed frog</name>
    <dbReference type="NCBI Taxonomy" id="8355"/>
    <lineage>
        <taxon>Eukaryota</taxon>
        <taxon>Metazoa</taxon>
        <taxon>Chordata</taxon>
        <taxon>Craniata</taxon>
        <taxon>Vertebrata</taxon>
        <taxon>Euteleostomi</taxon>
        <taxon>Amphibia</taxon>
        <taxon>Batrachia</taxon>
        <taxon>Anura</taxon>
        <taxon>Pipoidea</taxon>
        <taxon>Pipidae</taxon>
        <taxon>Xenopodinae</taxon>
        <taxon>Xenopus</taxon>
        <taxon>Xenopus</taxon>
    </lineage>
</organism>
<sequence>MTECFLPPASSPSEHRRAEHGGGLARTPSSEEISPTKFPGLYRTGEPLPPHDILHEPPDIVSEDEKDHGKKKGKFKKKEKRTEGYAAFQEDSSGDEAESPSKIKRSKGIHVFKKPSFSKKKEKDFKIKEKPKEEKHKEDKHKEKKSKDLTAADVVKQWKEKKKKKKPTPEPESLPVDIPRLRPVFGIPLIEAAERTMIYDGIRLPLVFRECIDFIEQHGMKCEGIYRVSGIKSKVDELKAAYDREESPNLEDYEPYTVASLLKQYLRELPENVLTKDLMPRFEEACGKTTEGERLQECQRLLKELPECNFCLTSWLVVHMDHVIEQELETKMNIQNISIVLSPTVQISNRVLYVFFTHVQELFGGVQIKRVIKPLRWSNMATMPALPETQETIKEEIRRQEFLLNCLHRELQAGVKDLSKEERLWEVQRILTALKRKLREAKRQDCETKIAQEIASLSKEDVSKEEMTENEEEVLNILLAQENEILTEQEELVAMEQYLRRQIATEKEEIDRLRAEISEIQSRQQHGRSETEEYSSESESESEDEEELQYILEDLQRQNEELEIKNTHLNQAIHEEREAIIELRVQLRLLQKQRVKSEQLQEEEELGKQNVPSQLPRDNLPETKAPKDQPKALMEQMKPSPIKKTGKKLSSETLI</sequence>
<feature type="initiator methionine" description="Removed" evidence="1">
    <location>
        <position position="1"/>
    </location>
</feature>
<feature type="chain" id="PRO_0000228812" description="RalA-binding protein 1-A">
    <location>
        <begin position="2"/>
        <end position="655"/>
    </location>
</feature>
<feature type="repeat" description="1">
    <location>
        <begin position="133"/>
        <end position="137"/>
    </location>
</feature>
<feature type="repeat" description="2">
    <location>
        <begin position="138"/>
        <end position="142"/>
    </location>
</feature>
<feature type="domain" description="Rho-GAP" evidence="4">
    <location>
        <begin position="187"/>
        <end position="383"/>
    </location>
</feature>
<feature type="region of interest" description="Disordered" evidence="5">
    <location>
        <begin position="1"/>
        <end position="153"/>
    </location>
</feature>
<feature type="region of interest" description="Nuclear localization signal" evidence="7">
    <location>
        <begin position="102"/>
        <end position="119"/>
    </location>
</feature>
<feature type="region of interest" description="2 X 5 AA tandem repeats of E-[D/E]-K-H-K">
    <location>
        <begin position="133"/>
        <end position="142"/>
    </location>
</feature>
<feature type="region of interest" description="Mediates association with membranes and could form transmembrane domains" evidence="2">
    <location>
        <begin position="149"/>
        <end position="214"/>
    </location>
</feature>
<feature type="region of interest" description="Mediates interaction with RALA and RALB" evidence="2">
    <location>
        <begin position="398"/>
        <end position="495"/>
    </location>
</feature>
<feature type="region of interest" description="Required to maintain nuclear localization" evidence="7">
    <location>
        <begin position="494"/>
        <end position="510"/>
    </location>
</feature>
<feature type="region of interest" description="Mediates interaction with REPS1 and REPS2" evidence="3">
    <location>
        <begin position="496"/>
        <end position="655"/>
    </location>
</feature>
<feature type="region of interest" description="Disordered" evidence="5">
    <location>
        <begin position="520"/>
        <end position="548"/>
    </location>
</feature>
<feature type="region of interest" description="Disordered" evidence="5">
    <location>
        <begin position="600"/>
        <end position="655"/>
    </location>
</feature>
<feature type="compositionally biased region" description="Basic and acidic residues" evidence="5">
    <location>
        <begin position="52"/>
        <end position="68"/>
    </location>
</feature>
<feature type="compositionally biased region" description="Basic residues" evidence="5">
    <location>
        <begin position="69"/>
        <end position="79"/>
    </location>
</feature>
<feature type="compositionally biased region" description="Basic residues" evidence="5">
    <location>
        <begin position="102"/>
        <end position="118"/>
    </location>
</feature>
<feature type="compositionally biased region" description="Basic and acidic residues" evidence="5">
    <location>
        <begin position="119"/>
        <end position="150"/>
    </location>
</feature>
<feature type="compositionally biased region" description="Acidic residues" evidence="5">
    <location>
        <begin position="532"/>
        <end position="548"/>
    </location>
</feature>
<feature type="compositionally biased region" description="Basic and acidic residues" evidence="5">
    <location>
        <begin position="619"/>
        <end position="630"/>
    </location>
</feature>
<feature type="binding site" evidence="2">
    <location>
        <begin position="69"/>
        <end position="74"/>
    </location>
    <ligand>
        <name>ATP</name>
        <dbReference type="ChEBI" id="CHEBI:30616"/>
    </ligand>
</feature>
<feature type="binding site" evidence="2">
    <location>
        <begin position="413"/>
        <end position="420"/>
    </location>
    <ligand>
        <name>ATP</name>
        <dbReference type="ChEBI" id="CHEBI:30616"/>
    </ligand>
</feature>
<feature type="site" description="Arginine finger; crucial for GTP hydrolysis by stabilizing the transition state" evidence="4">
    <location>
        <position position="227"/>
    </location>
</feature>
<feature type="splice variant" id="VSP_051990" description="In isoform 2." evidence="11">
    <original>ISNRVLYVFFTHVQE</original>
    <variation>VQKKHLPELGMGFWF</variation>
    <location>
        <begin position="347"/>
        <end position="361"/>
    </location>
</feature>
<feature type="splice variant" id="VSP_051991" description="In isoform 2." evidence="11">
    <location>
        <begin position="362"/>
        <end position="655"/>
    </location>
</feature>
<feature type="sequence conflict" description="In Ref. 1; CAB65771." evidence="12" ref="1">
    <original>TECFLPPASSPSEHRRAE</original>
    <variation>EFGTR</variation>
    <location>
        <begin position="2"/>
        <end position="19"/>
    </location>
</feature>
<evidence type="ECO:0000250" key="1"/>
<evidence type="ECO:0000250" key="2">
    <source>
        <dbReference type="UniProtKB" id="Q15311"/>
    </source>
</evidence>
<evidence type="ECO:0000250" key="3">
    <source>
        <dbReference type="UniProtKB" id="Q62796"/>
    </source>
</evidence>
<evidence type="ECO:0000255" key="4">
    <source>
        <dbReference type="PROSITE-ProRule" id="PRU00172"/>
    </source>
</evidence>
<evidence type="ECO:0000256" key="5">
    <source>
        <dbReference type="SAM" id="MobiDB-lite"/>
    </source>
</evidence>
<evidence type="ECO:0000269" key="6">
    <source>
    </source>
</evidence>
<evidence type="ECO:0000269" key="7">
    <source>
    </source>
</evidence>
<evidence type="ECO:0000269" key="8">
    <source>
    </source>
</evidence>
<evidence type="ECO:0000303" key="9">
    <source>
    </source>
</evidence>
<evidence type="ECO:0000303" key="10">
    <source>
    </source>
</evidence>
<evidence type="ECO:0000303" key="11">
    <source ref="2"/>
</evidence>
<evidence type="ECO:0000305" key="12"/>
<evidence type="ECO:0000312" key="13">
    <source>
        <dbReference type="EMBL" id="AAH70617.1"/>
    </source>
</evidence>
<evidence type="ECO:0000312" key="14">
    <source>
        <dbReference type="EMBL" id="CAB65771.1"/>
    </source>
</evidence>
<proteinExistence type="evidence at protein level"/>
<protein>
    <recommendedName>
        <fullName evidence="3">RalA-binding protein 1-A</fullName>
        <shortName evidence="3">RalBP1-A</shortName>
    </recommendedName>
    <alternativeName>
        <fullName evidence="2">Dinitrophenyl S-glutathione ATPase</fullName>
        <shortName evidence="2">DNP-SG ATPase</shortName>
        <ecNumber evidence="2">7.6.2.2</ecNumber>
        <ecNumber evidence="2">7.6.2.3</ecNumber>
    </alternativeName>
    <alternativeName>
        <fullName evidence="9">Ral-interacting protein</fullName>
    </alternativeName>
    <alternativeName>
        <fullName>Ral-interacting protein 1-A</fullName>
        <shortName>RIP1-A</shortName>
    </alternativeName>
    <alternativeName>
        <fullName>XRLIP2</fullName>
    </alternativeName>
    <alternativeName>
        <fullName>XRLIP76-A</fullName>
    </alternativeName>
</protein>
<reference evidence="12 14" key="1">
    <citation type="journal article" date="2004" name="Mech. Dev.">
        <title>RLIP mediates downstream signalling from RalB to the actin cytoskeleton during Xenopus early development.</title>
        <authorList>
            <person name="Lebreton S."/>
            <person name="Boissel L."/>
            <person name="Iouzalen N."/>
            <person name="Moreau J."/>
        </authorList>
    </citation>
    <scope>NUCLEOTIDE SEQUENCE [MRNA] (ISOFORM 1)</scope>
    <scope>FUNCTION</scope>
    <scope>INTERACTION WITH RALB</scope>
    <scope>SUBCELLULAR LOCATION</scope>
    <scope>TOPOLOGY</scope>
    <scope>DEVELOPMENTAL STAGE</scope>
    <source>
        <tissue evidence="6">Oocyte</tissue>
    </source>
</reference>
<reference evidence="12 13" key="2">
    <citation type="submission" date="2004-05" db="EMBL/GenBank/DDBJ databases">
        <authorList>
            <consortium name="NIH - Xenopus Gene Collection (XGC) project"/>
        </authorList>
    </citation>
    <scope>NUCLEOTIDE SEQUENCE [LARGE SCALE MRNA] (ISOFORM 2)</scope>
    <source>
        <tissue evidence="13">Embryo</tissue>
    </source>
</reference>
<reference evidence="12" key="3">
    <citation type="journal article" date="1998" name="Biochem. Biophys. Res. Commun.">
        <title>Identification and characterization in Xenopus of XsmgGDS, a RalB-binding protein.</title>
        <authorList>
            <person name="Iouzalen N."/>
            <person name="Camonis J."/>
            <person name="Moreau J."/>
        </authorList>
    </citation>
    <scope>INTERACTION WITH RALA AND RALB</scope>
</reference>
<reference key="4">
    <citation type="journal article" date="2012" name="FASEB J.">
        <title>Dynamics of the subcellular localization of RalBP1/RLIP through the cell cycle: the role of targeting signals and of protein-protein interactions.</title>
        <authorList>
            <person name="Fillatre J."/>
            <person name="Delacour D."/>
            <person name="Van Hove L."/>
            <person name="Bagarre T."/>
            <person name="Houssin N."/>
            <person name="Soulika M."/>
            <person name="Veitia R.A."/>
            <person name="Moreau J."/>
        </authorList>
    </citation>
    <scope>SUBCELLULAR LOCATION (ISOFORMS 1 AND 2)</scope>
    <scope>REGION</scope>
</reference>